<proteinExistence type="evidence at protein level"/>
<feature type="chain" id="PRO_0000165783" description="Cytosol aminopeptidase">
    <location>
        <begin position="1"/>
        <end position="497"/>
    </location>
</feature>
<feature type="active site" evidence="2">
    <location>
        <position position="279"/>
    </location>
</feature>
<feature type="active site" evidence="2">
    <location>
        <position position="353"/>
    </location>
</feature>
<feature type="binding site" evidence="1">
    <location>
        <position position="267"/>
    </location>
    <ligand>
        <name>Mn(2+)</name>
        <dbReference type="ChEBI" id="CHEBI:29035"/>
        <label>2</label>
    </ligand>
</feature>
<feature type="binding site" evidence="1">
    <location>
        <position position="272"/>
    </location>
    <ligand>
        <name>Mn(2+)</name>
        <dbReference type="ChEBI" id="CHEBI:29035"/>
        <label>1</label>
    </ligand>
</feature>
<feature type="binding site" evidence="1">
    <location>
        <position position="272"/>
    </location>
    <ligand>
        <name>Mn(2+)</name>
        <dbReference type="ChEBI" id="CHEBI:29035"/>
        <label>2</label>
    </ligand>
</feature>
<feature type="binding site" evidence="1">
    <location>
        <position position="290"/>
    </location>
    <ligand>
        <name>Mn(2+)</name>
        <dbReference type="ChEBI" id="CHEBI:29035"/>
        <label>2</label>
    </ligand>
</feature>
<feature type="binding site" evidence="1">
    <location>
        <position position="349"/>
    </location>
    <ligand>
        <name>Mn(2+)</name>
        <dbReference type="ChEBI" id="CHEBI:29035"/>
        <label>1</label>
    </ligand>
</feature>
<feature type="binding site" evidence="1">
    <location>
        <position position="351"/>
    </location>
    <ligand>
        <name>Mn(2+)</name>
        <dbReference type="ChEBI" id="CHEBI:29035"/>
        <label>1</label>
    </ligand>
</feature>
<feature type="binding site" evidence="1">
    <location>
        <position position="351"/>
    </location>
    <ligand>
        <name>Mn(2+)</name>
        <dbReference type="ChEBI" id="CHEBI:29035"/>
        <label>2</label>
    </ligand>
</feature>
<feature type="strand" evidence="4">
    <location>
        <begin position="2"/>
        <end position="6"/>
    </location>
</feature>
<feature type="helix" evidence="4">
    <location>
        <begin position="10"/>
        <end position="12"/>
    </location>
</feature>
<feature type="strand" evidence="4">
    <location>
        <begin position="18"/>
        <end position="23"/>
    </location>
</feature>
<feature type="helix" evidence="4">
    <location>
        <begin position="24"/>
        <end position="26"/>
    </location>
</feature>
<feature type="helix" evidence="4">
    <location>
        <begin position="30"/>
        <end position="38"/>
    </location>
</feature>
<feature type="turn" evidence="4">
    <location>
        <begin position="39"/>
        <end position="41"/>
    </location>
</feature>
<feature type="helix" evidence="4">
    <location>
        <begin position="42"/>
        <end position="48"/>
    </location>
</feature>
<feature type="strand" evidence="4">
    <location>
        <begin position="59"/>
        <end position="62"/>
    </location>
</feature>
<feature type="strand" evidence="4">
    <location>
        <begin position="69"/>
        <end position="71"/>
    </location>
</feature>
<feature type="strand" evidence="4">
    <location>
        <begin position="73"/>
        <end position="82"/>
    </location>
</feature>
<feature type="helix" evidence="4">
    <location>
        <begin position="86"/>
        <end position="102"/>
    </location>
</feature>
<feature type="strand" evidence="4">
    <location>
        <begin position="106"/>
        <end position="110"/>
    </location>
</feature>
<feature type="turn" evidence="4">
    <location>
        <begin position="122"/>
        <end position="124"/>
    </location>
</feature>
<feature type="helix" evidence="4">
    <location>
        <begin position="125"/>
        <end position="136"/>
    </location>
</feature>
<feature type="strand" evidence="4">
    <location>
        <begin position="156"/>
        <end position="160"/>
    </location>
</feature>
<feature type="helix" evidence="4">
    <location>
        <begin position="163"/>
        <end position="165"/>
    </location>
</feature>
<feature type="helix" evidence="4">
    <location>
        <begin position="166"/>
        <end position="191"/>
    </location>
</feature>
<feature type="turn" evidence="4">
    <location>
        <begin position="194"/>
        <end position="196"/>
    </location>
</feature>
<feature type="helix" evidence="4">
    <location>
        <begin position="199"/>
        <end position="212"/>
    </location>
</feature>
<feature type="strand" evidence="4">
    <location>
        <begin position="216"/>
        <end position="221"/>
    </location>
</feature>
<feature type="helix" evidence="4">
    <location>
        <begin position="223"/>
        <end position="228"/>
    </location>
</feature>
<feature type="helix" evidence="4">
    <location>
        <begin position="232"/>
        <end position="238"/>
    </location>
</feature>
<feature type="strand" evidence="4">
    <location>
        <begin position="241"/>
        <end position="243"/>
    </location>
</feature>
<feature type="strand" evidence="4">
    <location>
        <begin position="246"/>
        <end position="253"/>
    </location>
</feature>
<feature type="strand" evidence="4">
    <location>
        <begin position="262"/>
        <end position="272"/>
    </location>
</feature>
<feature type="helix" evidence="4">
    <location>
        <begin position="284"/>
        <end position="289"/>
    </location>
</feature>
<feature type="helix" evidence="4">
    <location>
        <begin position="292"/>
        <end position="307"/>
    </location>
</feature>
<feature type="strand" evidence="4">
    <location>
        <begin position="310"/>
        <end position="322"/>
    </location>
</feature>
<feature type="strand" evidence="4">
    <location>
        <begin position="333"/>
        <end position="336"/>
    </location>
</feature>
<feature type="strand" evidence="4">
    <location>
        <begin position="342"/>
        <end position="346"/>
    </location>
</feature>
<feature type="helix" evidence="4">
    <location>
        <begin position="352"/>
        <end position="363"/>
    </location>
</feature>
<feature type="helix" evidence="4">
    <location>
        <begin position="364"/>
        <end position="366"/>
    </location>
</feature>
<feature type="strand" evidence="4">
    <location>
        <begin position="369"/>
        <end position="375"/>
    </location>
</feature>
<feature type="helix" evidence="4">
    <location>
        <begin position="379"/>
        <end position="385"/>
    </location>
</feature>
<feature type="turn" evidence="4">
    <location>
        <begin position="386"/>
        <end position="388"/>
    </location>
</feature>
<feature type="strand" evidence="4">
    <location>
        <begin position="389"/>
        <end position="395"/>
    </location>
</feature>
<feature type="helix" evidence="4">
    <location>
        <begin position="397"/>
        <end position="410"/>
    </location>
</feature>
<feature type="strand" evidence="4">
    <location>
        <begin position="414"/>
        <end position="416"/>
    </location>
</feature>
<feature type="helix" evidence="4">
    <location>
        <begin position="421"/>
        <end position="424"/>
    </location>
</feature>
<feature type="helix" evidence="4">
    <location>
        <begin position="425"/>
        <end position="427"/>
    </location>
</feature>
<feature type="strand" evidence="4">
    <location>
        <begin position="430"/>
        <end position="436"/>
    </location>
</feature>
<feature type="strand" evidence="4">
    <location>
        <begin position="440"/>
        <end position="442"/>
    </location>
</feature>
<feature type="helix" evidence="4">
    <location>
        <begin position="443"/>
        <end position="452"/>
    </location>
</feature>
<feature type="strand" evidence="4">
    <location>
        <begin position="460"/>
        <end position="464"/>
    </location>
</feature>
<feature type="turn" evidence="4">
    <location>
        <begin position="466"/>
        <end position="468"/>
    </location>
</feature>
<feature type="strand" evidence="4">
    <location>
        <begin position="469"/>
        <end position="471"/>
    </location>
</feature>
<feature type="helix" evidence="4">
    <location>
        <begin position="484"/>
        <end position="495"/>
    </location>
</feature>
<protein>
    <recommendedName>
        <fullName>Cytosol aminopeptidase</fullName>
        <ecNumber>3.4.11.1</ecNumber>
    </recommendedName>
    <alternativeName>
        <fullName>Leucine aminopeptidase</fullName>
        <shortName>LAP</shortName>
        <ecNumber>3.4.11.10</ecNumber>
    </alternativeName>
    <alternativeName>
        <fullName>Leucyl aminopeptidase</fullName>
    </alternativeName>
</protein>
<comment type="function">
    <text evidence="1">Presumably involved in the processing and regular turnover of intracellular proteins. Catalyzes the removal of unsubstituted N-terminal amino acids from various peptides (By similarity).</text>
</comment>
<comment type="catalytic activity">
    <reaction>
        <text>Release of an N-terminal amino acid, Xaa-|-Yaa-, in which Xaa is preferably Leu, but may be other amino acids including Pro although not Arg or Lys, and Yaa may be Pro. Amino acid amides and methyl esters are also readily hydrolyzed, but rates on arylamides are exceedingly low.</text>
        <dbReference type="EC" id="3.4.11.1"/>
    </reaction>
</comment>
<comment type="catalytic activity">
    <reaction>
        <text>Release of an N-terminal amino acid, preferentially leucine, but not glutamic or aspartic acids.</text>
        <dbReference type="EC" id="3.4.11.10"/>
    </reaction>
</comment>
<comment type="cofactor">
    <cofactor evidence="1">
        <name>Mn(2+)</name>
        <dbReference type="ChEBI" id="CHEBI:29035"/>
    </cofactor>
    <text evidence="1">Binds 2 manganese ions per subunit.</text>
</comment>
<comment type="subcellular location">
    <subcellularLocation>
        <location evidence="1">Cytoplasm</location>
    </subcellularLocation>
</comment>
<comment type="similarity">
    <text evidence="3">Belongs to the peptidase M17 family.</text>
</comment>
<organism>
    <name type="scientific">Pseudomonas putida</name>
    <name type="common">Arthrobacter siderocapsulatus</name>
    <dbReference type="NCBI Taxonomy" id="303"/>
    <lineage>
        <taxon>Bacteria</taxon>
        <taxon>Pseudomonadati</taxon>
        <taxon>Pseudomonadota</taxon>
        <taxon>Gammaproteobacteria</taxon>
        <taxon>Pseudomonadales</taxon>
        <taxon>Pseudomonadaceae</taxon>
        <taxon>Pseudomonas</taxon>
    </lineage>
</organism>
<gene>
    <name type="primary">pepA</name>
</gene>
<sequence>MELVVKSVAAASVKTATLVIPVGENRKLGAVAKAVDLASEGAISAVLKRGDLAGKPGQTLLLQNLQGLKAERVLLVGSGKDEALGDRTWRKLVASVAGVLKGLNGADAVLALDDVAVNNRDAHYGKYRLLAETLLDGEYVFDRFKSQKVEPRALKKVTLLADKAGQAEVERAVKHASAIATGMAFTRDLGNLPPNLCHPSFLAEQAKELGKAHKALKVEVLDEKKIKDLGMGAFYAVGQGSDQPPRLIVLNYQGGKKADKPFVLVGKGITFDTGGISLKPGAGMDEMKYDMCGAASVFGTLRAVLELQLPVNLVCLLACAENMPSGGATRPGDIVTTMSGQTVEILNTDAEGRLVLCDTLTYAERFKPQAVIDIATLTGACIVALGSHTTGLMGNNDDLVGQLLDAGKRADDRAWQLPLFDEYQEQLDSPFADMGNIGGPKAGTITAGCFLSRFAKAYNWAHMDIAGTAWISGGKDKGATGRPVPLLTQYLLDRAGA</sequence>
<dbReference type="EC" id="3.4.11.1"/>
<dbReference type="EC" id="3.4.11.10"/>
<dbReference type="EMBL" id="AJ010261">
    <property type="protein sequence ID" value="CAA09054.1"/>
    <property type="molecule type" value="Genomic_DNA"/>
</dbReference>
<dbReference type="RefSeq" id="WP_016501309.1">
    <property type="nucleotide sequence ID" value="NZ_WOWR01000017.1"/>
</dbReference>
<dbReference type="PDB" id="3H8E">
    <property type="method" value="X-ray"/>
    <property type="resolution" value="2.75 A"/>
    <property type="chains" value="A/B=1-497"/>
</dbReference>
<dbReference type="PDB" id="3H8F">
    <property type="method" value="X-ray"/>
    <property type="resolution" value="2.20 A"/>
    <property type="chains" value="A/B/C/D/E/F=1-497"/>
</dbReference>
<dbReference type="PDB" id="3H8G">
    <property type="method" value="X-ray"/>
    <property type="resolution" value="1.50 A"/>
    <property type="chains" value="A/B/C/D/E/F=1-497"/>
</dbReference>
<dbReference type="PDBsum" id="3H8E"/>
<dbReference type="PDBsum" id="3H8F"/>
<dbReference type="PDBsum" id="3H8G"/>
<dbReference type="SMR" id="O86436"/>
<dbReference type="MEROPS" id="M17.003"/>
<dbReference type="eggNOG" id="COG0260">
    <property type="taxonomic scope" value="Bacteria"/>
</dbReference>
<dbReference type="OrthoDB" id="9809354at2"/>
<dbReference type="BRENDA" id="3.4.11.10">
    <property type="organism ID" value="5092"/>
</dbReference>
<dbReference type="EvolutionaryTrace" id="O86436"/>
<dbReference type="GO" id="GO:0005737">
    <property type="term" value="C:cytoplasm"/>
    <property type="evidence" value="ECO:0007669"/>
    <property type="project" value="UniProtKB-SubCell"/>
</dbReference>
<dbReference type="GO" id="GO:0030145">
    <property type="term" value="F:manganese ion binding"/>
    <property type="evidence" value="ECO:0007669"/>
    <property type="project" value="UniProtKB-UniRule"/>
</dbReference>
<dbReference type="GO" id="GO:0070006">
    <property type="term" value="F:metalloaminopeptidase activity"/>
    <property type="evidence" value="ECO:0007669"/>
    <property type="project" value="InterPro"/>
</dbReference>
<dbReference type="GO" id="GO:0006508">
    <property type="term" value="P:proteolysis"/>
    <property type="evidence" value="ECO:0007669"/>
    <property type="project" value="UniProtKB-KW"/>
</dbReference>
<dbReference type="CDD" id="cd00433">
    <property type="entry name" value="Peptidase_M17"/>
    <property type="match status" value="1"/>
</dbReference>
<dbReference type="FunFam" id="3.40.630.10:FF:000004">
    <property type="entry name" value="Probable cytosol aminopeptidase"/>
    <property type="match status" value="1"/>
</dbReference>
<dbReference type="Gene3D" id="3.40.220.10">
    <property type="entry name" value="Leucine Aminopeptidase, subunit E, domain 1"/>
    <property type="match status" value="1"/>
</dbReference>
<dbReference type="Gene3D" id="3.40.630.10">
    <property type="entry name" value="Zn peptidases"/>
    <property type="match status" value="1"/>
</dbReference>
<dbReference type="HAMAP" id="MF_00181">
    <property type="entry name" value="Cytosol_peptidase_M17"/>
    <property type="match status" value="1"/>
</dbReference>
<dbReference type="InterPro" id="IPR011356">
    <property type="entry name" value="Leucine_aapep/pepB"/>
</dbReference>
<dbReference type="InterPro" id="IPR043472">
    <property type="entry name" value="Macro_dom-like"/>
</dbReference>
<dbReference type="InterPro" id="IPR000819">
    <property type="entry name" value="Peptidase_M17_C"/>
</dbReference>
<dbReference type="InterPro" id="IPR023042">
    <property type="entry name" value="Peptidase_M17_leu_NH2_pept"/>
</dbReference>
<dbReference type="InterPro" id="IPR008283">
    <property type="entry name" value="Peptidase_M17_N"/>
</dbReference>
<dbReference type="NCBIfam" id="NF002073">
    <property type="entry name" value="PRK00913.1-2"/>
    <property type="match status" value="1"/>
</dbReference>
<dbReference type="NCBIfam" id="NF002074">
    <property type="entry name" value="PRK00913.1-4"/>
    <property type="match status" value="1"/>
</dbReference>
<dbReference type="NCBIfam" id="NF002077">
    <property type="entry name" value="PRK00913.2-4"/>
    <property type="match status" value="1"/>
</dbReference>
<dbReference type="PANTHER" id="PTHR11963:SF23">
    <property type="entry name" value="CYTOSOL AMINOPEPTIDASE"/>
    <property type="match status" value="1"/>
</dbReference>
<dbReference type="PANTHER" id="PTHR11963">
    <property type="entry name" value="LEUCINE AMINOPEPTIDASE-RELATED"/>
    <property type="match status" value="1"/>
</dbReference>
<dbReference type="Pfam" id="PF00883">
    <property type="entry name" value="Peptidase_M17"/>
    <property type="match status" value="1"/>
</dbReference>
<dbReference type="Pfam" id="PF02789">
    <property type="entry name" value="Peptidase_M17_N"/>
    <property type="match status" value="1"/>
</dbReference>
<dbReference type="PRINTS" id="PR00481">
    <property type="entry name" value="LAMNOPPTDASE"/>
</dbReference>
<dbReference type="SUPFAM" id="SSF52949">
    <property type="entry name" value="Macro domain-like"/>
    <property type="match status" value="1"/>
</dbReference>
<dbReference type="SUPFAM" id="SSF53187">
    <property type="entry name" value="Zn-dependent exopeptidases"/>
    <property type="match status" value="1"/>
</dbReference>
<dbReference type="PROSITE" id="PS00631">
    <property type="entry name" value="CYTOSOL_AP"/>
    <property type="match status" value="1"/>
</dbReference>
<reference key="1">
    <citation type="submission" date="1998-08" db="EMBL/GenBank/DDBJ databases">
        <title>New developments in the enzymatic preparation and use of enantiopure alpha-hydrogen and alpha,alpha-disubstituted alpha-amino acids.</title>
        <authorList>
            <person name="Sonke T."/>
            <person name="Kaptein B."/>
            <person name="Boesten W.H.J."/>
            <person name="Broxterman Q.B."/>
            <person name="Kamphuis J."/>
            <person name="Formaggio F."/>
            <person name="Toniolo C."/>
            <person name="Rutjes F.P.J.T."/>
            <person name="Schoemaker H.E."/>
        </authorList>
    </citation>
    <scope>NUCLEOTIDE SEQUENCE [GENOMIC DNA]</scope>
    <source>
        <strain>ATCC 12633 / DSM 291 / JCM 13063 / CCUG 12690 / LMG 2257 / NBRC 14164 / NCIMB 9494 / NCTC 10936 / VKM B-2187 / Stanier 90</strain>
    </source>
</reference>
<accession>O86436</accession>
<evidence type="ECO:0000250" key="1"/>
<evidence type="ECO:0000255" key="2"/>
<evidence type="ECO:0000305" key="3"/>
<evidence type="ECO:0007829" key="4">
    <source>
        <dbReference type="PDB" id="3H8G"/>
    </source>
</evidence>
<name>AMPA_PSEPU</name>
<keyword id="KW-0002">3D-structure</keyword>
<keyword id="KW-0031">Aminopeptidase</keyword>
<keyword id="KW-0963">Cytoplasm</keyword>
<keyword id="KW-0378">Hydrolase</keyword>
<keyword id="KW-0464">Manganese</keyword>
<keyword id="KW-0479">Metal-binding</keyword>
<keyword id="KW-0645">Protease</keyword>